<sequence>HLRNHSGWKPFRCDKCDYQCVNKSMLNSHLKSHSNIYQYRCADCTYATKYCHSLKL</sequence>
<organism>
    <name type="scientific">Locusta migratoria</name>
    <name type="common">Migratory locust</name>
    <dbReference type="NCBI Taxonomy" id="7004"/>
    <lineage>
        <taxon>Eukaryota</taxon>
        <taxon>Metazoa</taxon>
        <taxon>Ecdysozoa</taxon>
        <taxon>Arthropoda</taxon>
        <taxon>Hexapoda</taxon>
        <taxon>Insecta</taxon>
        <taxon>Pterygota</taxon>
        <taxon>Neoptera</taxon>
        <taxon>Polyneoptera</taxon>
        <taxon>Orthoptera</taxon>
        <taxon>Caelifera</taxon>
        <taxon>Acrididea</taxon>
        <taxon>Acridomorpha</taxon>
        <taxon>Acridoidea</taxon>
        <taxon>Acrididae</taxon>
        <taxon>Oedipodinae</taxon>
        <taxon>Locusta</taxon>
    </lineage>
</organism>
<proteinExistence type="inferred from homology"/>
<comment type="function">
    <text>Gap class segmentation protein that controls development of head structures.</text>
</comment>
<comment type="subcellular location">
    <subcellularLocation>
        <location evidence="2">Nucleus</location>
    </subcellularLocation>
</comment>
<comment type="similarity">
    <text evidence="2">Belongs to the hunchback C2H2-type zinc-finger protein family.</text>
</comment>
<protein>
    <recommendedName>
        <fullName>Protein hunchback</fullName>
    </recommendedName>
</protein>
<accession>Q01777</accession>
<keyword id="KW-0217">Developmental protein</keyword>
<keyword id="KW-0238">DNA-binding</keyword>
<keyword id="KW-0302">Gap protein</keyword>
<keyword id="KW-0479">Metal-binding</keyword>
<keyword id="KW-0539">Nucleus</keyword>
<keyword id="KW-0677">Repeat</keyword>
<keyword id="KW-0862">Zinc</keyword>
<keyword id="KW-0863">Zinc-finger</keyword>
<reference key="1">
    <citation type="journal article" date="1992" name="Proc. Natl. Acad. Sci. U.S.A.">
        <title>Evolutionary conservation pattern of zinc-finger domains of Drosophila segmentation genes.</title>
        <authorList>
            <person name="Sommer R.J."/>
            <person name="Retzlaff M."/>
            <person name="Goerlich K."/>
            <person name="Sander K."/>
            <person name="Tautz D."/>
        </authorList>
    </citation>
    <scope>NUCLEOTIDE SEQUENCE [GENOMIC DNA]</scope>
</reference>
<dbReference type="EMBL" id="L01600">
    <property type="protein sequence ID" value="AAA29286.1"/>
    <property type="molecule type" value="Genomic_DNA"/>
</dbReference>
<dbReference type="SMR" id="Q01777"/>
<dbReference type="GO" id="GO:0005634">
    <property type="term" value="C:nucleus"/>
    <property type="evidence" value="ECO:0007669"/>
    <property type="project" value="UniProtKB-SubCell"/>
</dbReference>
<dbReference type="GO" id="GO:0003677">
    <property type="term" value="F:DNA binding"/>
    <property type="evidence" value="ECO:0007669"/>
    <property type="project" value="UniProtKB-KW"/>
</dbReference>
<dbReference type="GO" id="GO:0008270">
    <property type="term" value="F:zinc ion binding"/>
    <property type="evidence" value="ECO:0007669"/>
    <property type="project" value="UniProtKB-KW"/>
</dbReference>
<dbReference type="GO" id="GO:0035282">
    <property type="term" value="P:segmentation"/>
    <property type="evidence" value="ECO:0007669"/>
    <property type="project" value="UniProtKB-KW"/>
</dbReference>
<dbReference type="FunFam" id="3.30.160.60:FF:001301">
    <property type="entry name" value="Blast:Protein hunchback"/>
    <property type="match status" value="1"/>
</dbReference>
<dbReference type="Gene3D" id="3.30.160.60">
    <property type="entry name" value="Classic Zinc Finger"/>
    <property type="match status" value="1"/>
</dbReference>
<dbReference type="InterPro" id="IPR036236">
    <property type="entry name" value="Znf_C2H2_sf"/>
</dbReference>
<dbReference type="InterPro" id="IPR013087">
    <property type="entry name" value="Znf_C2H2_type"/>
</dbReference>
<dbReference type="SMART" id="SM00355">
    <property type="entry name" value="ZnF_C2H2"/>
    <property type="match status" value="1"/>
</dbReference>
<dbReference type="SUPFAM" id="SSF57667">
    <property type="entry name" value="beta-beta-alpha zinc fingers"/>
    <property type="match status" value="1"/>
</dbReference>
<dbReference type="PROSITE" id="PS00028">
    <property type="entry name" value="ZINC_FINGER_C2H2_1"/>
    <property type="match status" value="1"/>
</dbReference>
<dbReference type="PROSITE" id="PS50157">
    <property type="entry name" value="ZINC_FINGER_C2H2_2"/>
    <property type="match status" value="1"/>
</dbReference>
<gene>
    <name type="primary">hb</name>
</gene>
<evidence type="ECO:0000255" key="1">
    <source>
        <dbReference type="PROSITE-ProRule" id="PRU00042"/>
    </source>
</evidence>
<evidence type="ECO:0000305" key="2"/>
<name>HUNB_LOCMI</name>
<feature type="chain" id="PRO_0000046975" description="Protein hunchback">
    <location>
        <begin position="1" status="less than"/>
        <end position="56" status="greater than"/>
    </location>
</feature>
<feature type="zinc finger region" description="C2H2-type 1" evidence="1">
    <location>
        <begin position="1" status="less than"/>
        <end position="5"/>
    </location>
</feature>
<feature type="zinc finger region" description="C2H2-type 2" evidence="1">
    <location>
        <begin position="11"/>
        <end position="33"/>
    </location>
</feature>
<feature type="zinc finger region" description="C2H2-type 3" evidence="1">
    <location>
        <begin position="39"/>
        <end position="56" status="greater than"/>
    </location>
</feature>
<feature type="non-terminal residue">
    <location>
        <position position="1"/>
    </location>
</feature>
<feature type="non-terminal residue">
    <location>
        <position position="56"/>
    </location>
</feature>